<comment type="subcellular location">
    <subcellularLocation>
        <location evidence="1">Secreted</location>
    </subcellularLocation>
</comment>
<comment type="tissue specificity">
    <text evidence="3">Expressed by the venom gland.</text>
</comment>
<accession>P0DRF9</accession>
<keyword id="KW-0903">Direct protein sequencing</keyword>
<keyword id="KW-0964">Secreted</keyword>
<name>CRY14_TITOB</name>
<evidence type="ECO:0000269" key="1">
    <source>
    </source>
</evidence>
<evidence type="ECO:0000303" key="2">
    <source>
    </source>
</evidence>
<evidence type="ECO:0000305" key="3">
    <source>
    </source>
</evidence>
<reference key="1">
    <citation type="journal article" date="2018" name="J. Proteomics">
        <title>Profiling the short, linear, non-disulfide bond-containing peptidome from the venom of the scorpion Tityus obscurus.</title>
        <authorList>
            <person name="Dias N.B."/>
            <person name="de Souza B.M."/>
            <person name="Cocchi F.K."/>
            <person name="Chalkidis H.M."/>
            <person name="Dorce V.A.C."/>
            <person name="Palma M.S."/>
        </authorList>
    </citation>
    <scope>PROTEIN SEQUENCE</scope>
    <scope>IDENTIFICATION BY MASS SPECTROMETRY</scope>
    <scope>SUBCELLULAR LOCATION</scope>
    <source>
        <tissue>Venom</tissue>
    </source>
</reference>
<feature type="peptide" id="PRO_0000461749" description="Cryptide Pep-14" evidence="1">
    <location>
        <begin position="1"/>
        <end position="16"/>
    </location>
</feature>
<protein>
    <recommendedName>
        <fullName evidence="2">Cryptide Pep-14</fullName>
    </recommendedName>
</protein>
<proteinExistence type="evidence at protein level"/>
<dbReference type="GO" id="GO:0005576">
    <property type="term" value="C:extracellular region"/>
    <property type="evidence" value="ECO:0007669"/>
    <property type="project" value="UniProtKB-SubCell"/>
</dbReference>
<sequence>VYWLPAVLGSLLGFTP</sequence>
<organism>
    <name type="scientific">Tityus obscurus</name>
    <name type="common">Amazonian scorpion</name>
    <name type="synonym">Tityus cambridgei</name>
    <dbReference type="NCBI Taxonomy" id="1221240"/>
    <lineage>
        <taxon>Eukaryota</taxon>
        <taxon>Metazoa</taxon>
        <taxon>Ecdysozoa</taxon>
        <taxon>Arthropoda</taxon>
        <taxon>Chelicerata</taxon>
        <taxon>Arachnida</taxon>
        <taxon>Scorpiones</taxon>
        <taxon>Buthida</taxon>
        <taxon>Buthoidea</taxon>
        <taxon>Buthidae</taxon>
        <taxon>Tityus</taxon>
    </lineage>
</organism>